<reference key="1">
    <citation type="journal article" date="2016" name="Stand. Genomic Sci.">
        <title>Complete genome sequence of Methanospirillum hungatei type strain JF1.</title>
        <authorList>
            <person name="Gunsalus R.P."/>
            <person name="Cook L.E."/>
            <person name="Crable B."/>
            <person name="Rohlin L."/>
            <person name="McDonald E."/>
            <person name="Mouttaki H."/>
            <person name="Sieber J.R."/>
            <person name="Poweleit N."/>
            <person name="Zhou H."/>
            <person name="Lapidus A.L."/>
            <person name="Daligault H.E."/>
            <person name="Land M."/>
            <person name="Gilna P."/>
            <person name="Ivanova N."/>
            <person name="Kyrpides N."/>
            <person name="Culley D.E."/>
            <person name="McInerney M.J."/>
        </authorList>
    </citation>
    <scope>NUCLEOTIDE SEQUENCE [LARGE SCALE GENOMIC DNA]</scope>
    <source>
        <strain>ATCC 27890 / DSM 864 / NBRC 100397 / JF-1</strain>
    </source>
</reference>
<name>RS12_METHJ</name>
<dbReference type="EMBL" id="CP000254">
    <property type="protein sequence ID" value="ABD42522.1"/>
    <property type="molecule type" value="Genomic_DNA"/>
</dbReference>
<dbReference type="RefSeq" id="WP_011449776.1">
    <property type="nucleotide sequence ID" value="NC_007796.1"/>
</dbReference>
<dbReference type="SMR" id="Q2FS69"/>
<dbReference type="FunCoup" id="Q2FS69">
    <property type="interactions" value="156"/>
</dbReference>
<dbReference type="STRING" id="323259.Mhun_2830"/>
<dbReference type="EnsemblBacteria" id="ABD42522">
    <property type="protein sequence ID" value="ABD42522"/>
    <property type="gene ID" value="Mhun_2830"/>
</dbReference>
<dbReference type="KEGG" id="mhu:Mhun_2830"/>
<dbReference type="eggNOG" id="arCOG04255">
    <property type="taxonomic scope" value="Archaea"/>
</dbReference>
<dbReference type="HOGENOM" id="CLU_115574_0_1_2"/>
<dbReference type="InParanoid" id="Q2FS69"/>
<dbReference type="OrthoDB" id="45154at2157"/>
<dbReference type="Proteomes" id="UP000001941">
    <property type="component" value="Chromosome"/>
</dbReference>
<dbReference type="GO" id="GO:0015935">
    <property type="term" value="C:small ribosomal subunit"/>
    <property type="evidence" value="ECO:0007669"/>
    <property type="project" value="InterPro"/>
</dbReference>
<dbReference type="GO" id="GO:0019843">
    <property type="term" value="F:rRNA binding"/>
    <property type="evidence" value="ECO:0007669"/>
    <property type="project" value="UniProtKB-UniRule"/>
</dbReference>
<dbReference type="GO" id="GO:0003735">
    <property type="term" value="F:structural constituent of ribosome"/>
    <property type="evidence" value="ECO:0007669"/>
    <property type="project" value="InterPro"/>
</dbReference>
<dbReference type="GO" id="GO:0006412">
    <property type="term" value="P:translation"/>
    <property type="evidence" value="ECO:0007669"/>
    <property type="project" value="UniProtKB-UniRule"/>
</dbReference>
<dbReference type="CDD" id="cd03367">
    <property type="entry name" value="Ribosomal_S23"/>
    <property type="match status" value="1"/>
</dbReference>
<dbReference type="FunFam" id="2.40.50.140:FF:000007">
    <property type="entry name" value="40S ribosomal protein S23"/>
    <property type="match status" value="1"/>
</dbReference>
<dbReference type="Gene3D" id="2.40.50.140">
    <property type="entry name" value="Nucleic acid-binding proteins"/>
    <property type="match status" value="1"/>
</dbReference>
<dbReference type="HAMAP" id="MF_00403_A">
    <property type="entry name" value="Ribosomal_uS12_A"/>
    <property type="match status" value="1"/>
</dbReference>
<dbReference type="InterPro" id="IPR012340">
    <property type="entry name" value="NA-bd_OB-fold"/>
</dbReference>
<dbReference type="InterPro" id="IPR006032">
    <property type="entry name" value="Ribosomal_uS12"/>
</dbReference>
<dbReference type="InterPro" id="IPR022863">
    <property type="entry name" value="Ribosomal_uS12_arc"/>
</dbReference>
<dbReference type="InterPro" id="IPR005680">
    <property type="entry name" value="Ribosomal_uS12_euk/arc"/>
</dbReference>
<dbReference type="NCBIfam" id="NF003254">
    <property type="entry name" value="PRK04211.1"/>
    <property type="match status" value="1"/>
</dbReference>
<dbReference type="NCBIfam" id="TIGR00982">
    <property type="entry name" value="uS12_E_A"/>
    <property type="match status" value="1"/>
</dbReference>
<dbReference type="PANTHER" id="PTHR11652">
    <property type="entry name" value="30S RIBOSOMAL PROTEIN S12 FAMILY MEMBER"/>
    <property type="match status" value="1"/>
</dbReference>
<dbReference type="Pfam" id="PF00164">
    <property type="entry name" value="Ribosom_S12_S23"/>
    <property type="match status" value="1"/>
</dbReference>
<dbReference type="PIRSF" id="PIRSF002133">
    <property type="entry name" value="Ribosomal_S12/S23"/>
    <property type="match status" value="1"/>
</dbReference>
<dbReference type="SUPFAM" id="SSF50249">
    <property type="entry name" value="Nucleic acid-binding proteins"/>
    <property type="match status" value="1"/>
</dbReference>
<dbReference type="PROSITE" id="PS00055">
    <property type="entry name" value="RIBOSOMAL_S12"/>
    <property type="match status" value="1"/>
</dbReference>
<protein>
    <recommendedName>
        <fullName evidence="1">Small ribosomal subunit protein uS12</fullName>
    </recommendedName>
    <alternativeName>
        <fullName evidence="2">30S ribosomal protein S12</fullName>
    </alternativeName>
</protein>
<comment type="function">
    <text evidence="1">With S4 and S5 plays an important role in translational accuracy. Located at the interface of the 30S and 50S subunits.</text>
</comment>
<comment type="subunit">
    <text evidence="1">Part of the 30S ribosomal subunit.</text>
</comment>
<comment type="similarity">
    <text evidence="1">Belongs to the universal ribosomal protein uS12 family.</text>
</comment>
<evidence type="ECO:0000255" key="1">
    <source>
        <dbReference type="HAMAP-Rule" id="MF_00403"/>
    </source>
</evidence>
<evidence type="ECO:0000305" key="2"/>
<sequence length="142" mass="15582">MGQGKFAARKLKRDSARFRWSDPHFARTAGGLKLKSDPLEGAPQGRGIVLEKIGVEAKQPNSAIRKCVRVQLIKNGRQVSAFAVGDGAINFIDEHDEVEIEGIGGRLGRSMGDIPGVRFVVTKVNNVCLHELVIGRKEKPRR</sequence>
<accession>Q2FS69</accession>
<gene>
    <name evidence="1" type="primary">rps12</name>
    <name type="ordered locus">Mhun_2830</name>
</gene>
<keyword id="KW-1185">Reference proteome</keyword>
<keyword id="KW-0687">Ribonucleoprotein</keyword>
<keyword id="KW-0689">Ribosomal protein</keyword>
<keyword id="KW-0694">RNA-binding</keyword>
<keyword id="KW-0699">rRNA-binding</keyword>
<feature type="chain" id="PRO_0000238154" description="Small ribosomal subunit protein uS12">
    <location>
        <begin position="1"/>
        <end position="142"/>
    </location>
</feature>
<organism>
    <name type="scientific">Methanospirillum hungatei JF-1 (strain ATCC 27890 / DSM 864 / NBRC 100397 / JF-1)</name>
    <dbReference type="NCBI Taxonomy" id="323259"/>
    <lineage>
        <taxon>Archaea</taxon>
        <taxon>Methanobacteriati</taxon>
        <taxon>Methanobacteriota</taxon>
        <taxon>Stenosarchaea group</taxon>
        <taxon>Methanomicrobia</taxon>
        <taxon>Methanomicrobiales</taxon>
        <taxon>Methanospirillaceae</taxon>
        <taxon>Methanospirillum</taxon>
    </lineage>
</organism>
<proteinExistence type="inferred from homology"/>